<name>RBSD1_STRGG</name>
<keyword id="KW-0119">Carbohydrate metabolism</keyword>
<keyword id="KW-0963">Cytoplasm</keyword>
<keyword id="KW-0413">Isomerase</keyword>
<protein>
    <recommendedName>
        <fullName evidence="1">D-ribose pyranase 1</fullName>
        <ecNumber evidence="1">5.4.99.62</ecNumber>
    </recommendedName>
</protein>
<dbReference type="EC" id="5.4.99.62" evidence="1"/>
<dbReference type="EMBL" id="AP009493">
    <property type="protein sequence ID" value="BAG16975.1"/>
    <property type="molecule type" value="Genomic_DNA"/>
</dbReference>
<dbReference type="SMR" id="B1VNF2"/>
<dbReference type="KEGG" id="sgr:SGR_146"/>
<dbReference type="eggNOG" id="COG1869">
    <property type="taxonomic scope" value="Bacteria"/>
</dbReference>
<dbReference type="HOGENOM" id="CLU_135498_0_0_11"/>
<dbReference type="UniPathway" id="UPA00916">
    <property type="reaction ID" value="UER00888"/>
</dbReference>
<dbReference type="Proteomes" id="UP000001685">
    <property type="component" value="Chromosome"/>
</dbReference>
<dbReference type="GO" id="GO:0005829">
    <property type="term" value="C:cytosol"/>
    <property type="evidence" value="ECO:0007669"/>
    <property type="project" value="TreeGrafter"/>
</dbReference>
<dbReference type="GO" id="GO:0062193">
    <property type="term" value="F:D-ribose pyranase activity"/>
    <property type="evidence" value="ECO:0007669"/>
    <property type="project" value="UniProtKB-EC"/>
</dbReference>
<dbReference type="GO" id="GO:0016872">
    <property type="term" value="F:intramolecular lyase activity"/>
    <property type="evidence" value="ECO:0007669"/>
    <property type="project" value="UniProtKB-UniRule"/>
</dbReference>
<dbReference type="GO" id="GO:0048029">
    <property type="term" value="F:monosaccharide binding"/>
    <property type="evidence" value="ECO:0007669"/>
    <property type="project" value="InterPro"/>
</dbReference>
<dbReference type="GO" id="GO:0019303">
    <property type="term" value="P:D-ribose catabolic process"/>
    <property type="evidence" value="ECO:0007669"/>
    <property type="project" value="UniProtKB-UniRule"/>
</dbReference>
<dbReference type="Gene3D" id="3.40.1650.10">
    <property type="entry name" value="RbsD-like domain"/>
    <property type="match status" value="1"/>
</dbReference>
<dbReference type="HAMAP" id="MF_01661">
    <property type="entry name" value="D_rib_pyranase"/>
    <property type="match status" value="1"/>
</dbReference>
<dbReference type="InterPro" id="IPR023064">
    <property type="entry name" value="D-ribose_pyranase"/>
</dbReference>
<dbReference type="InterPro" id="IPR023750">
    <property type="entry name" value="RbsD-like_sf"/>
</dbReference>
<dbReference type="InterPro" id="IPR007721">
    <property type="entry name" value="RbsD_FucU"/>
</dbReference>
<dbReference type="NCBIfam" id="NF008761">
    <property type="entry name" value="PRK11797.1"/>
    <property type="match status" value="1"/>
</dbReference>
<dbReference type="PANTHER" id="PTHR37831">
    <property type="entry name" value="D-RIBOSE PYRANASE"/>
    <property type="match status" value="1"/>
</dbReference>
<dbReference type="PANTHER" id="PTHR37831:SF1">
    <property type="entry name" value="D-RIBOSE PYRANASE"/>
    <property type="match status" value="1"/>
</dbReference>
<dbReference type="Pfam" id="PF05025">
    <property type="entry name" value="RbsD_FucU"/>
    <property type="match status" value="1"/>
</dbReference>
<dbReference type="SUPFAM" id="SSF102546">
    <property type="entry name" value="RbsD-like"/>
    <property type="match status" value="1"/>
</dbReference>
<feature type="chain" id="PRO_0000346284" description="D-ribose pyranase 1">
    <location>
        <begin position="1"/>
        <end position="151"/>
    </location>
</feature>
<feature type="active site" description="Proton donor" evidence="1">
    <location>
        <position position="20"/>
    </location>
</feature>
<feature type="binding site" evidence="1">
    <location>
        <position position="28"/>
    </location>
    <ligand>
        <name>substrate</name>
    </ligand>
</feature>
<feature type="binding site" evidence="1">
    <location>
        <position position="98"/>
    </location>
    <ligand>
        <name>substrate</name>
    </ligand>
</feature>
<feature type="binding site" evidence="1">
    <location>
        <begin position="121"/>
        <end position="123"/>
    </location>
    <ligand>
        <name>substrate</name>
    </ligand>
</feature>
<proteinExistence type="inferred from homology"/>
<evidence type="ECO:0000255" key="1">
    <source>
        <dbReference type="HAMAP-Rule" id="MF_01661"/>
    </source>
</evidence>
<gene>
    <name evidence="1" type="primary">rbsD1</name>
    <name type="ordered locus">SGR_146</name>
</gene>
<comment type="function">
    <text evidence="1">Catalyzes the interconversion of beta-pyran and beta-furan forms of D-ribose.</text>
</comment>
<comment type="catalytic activity">
    <reaction evidence="1">
        <text>beta-D-ribopyranose = beta-D-ribofuranose</text>
        <dbReference type="Rhea" id="RHEA:25432"/>
        <dbReference type="ChEBI" id="CHEBI:27476"/>
        <dbReference type="ChEBI" id="CHEBI:47002"/>
        <dbReference type="EC" id="5.4.99.62"/>
    </reaction>
</comment>
<comment type="pathway">
    <text evidence="1">Carbohydrate metabolism; D-ribose degradation; D-ribose 5-phosphate from beta-D-ribopyranose: step 1/2.</text>
</comment>
<comment type="subunit">
    <text evidence="1">Homodecamer.</text>
</comment>
<comment type="subcellular location">
    <subcellularLocation>
        <location evidence="1">Cytoplasm</location>
    </subcellularLocation>
</comment>
<comment type="similarity">
    <text evidence="1">Belongs to the RbsD / FucU family. RbsD subfamily.</text>
</comment>
<accession>B1VNF2</accession>
<sequence>MKRSGILNAELGEALATLGHTDLLLVVDAGFPVPRDAHRIDLALAENLPDLRTVLGLIADELVVEGVVRAEDVPSHNPRLDSWLHERFSGAEFTTRPHAEVLGELAREAKAVVRTGAFEPWGNIGLYCGVDAPRWFGGEGVVVPEQYASKV</sequence>
<organism>
    <name type="scientific">Streptomyces griseus subsp. griseus (strain JCM 4626 / CBS 651.72 / NBRC 13350 / KCC S-0626 / ISP 5235)</name>
    <dbReference type="NCBI Taxonomy" id="455632"/>
    <lineage>
        <taxon>Bacteria</taxon>
        <taxon>Bacillati</taxon>
        <taxon>Actinomycetota</taxon>
        <taxon>Actinomycetes</taxon>
        <taxon>Kitasatosporales</taxon>
        <taxon>Streptomycetaceae</taxon>
        <taxon>Streptomyces</taxon>
    </lineage>
</organism>
<reference key="1">
    <citation type="journal article" date="2008" name="J. Bacteriol.">
        <title>Genome sequence of the streptomycin-producing microorganism Streptomyces griseus IFO 13350.</title>
        <authorList>
            <person name="Ohnishi Y."/>
            <person name="Ishikawa J."/>
            <person name="Hara H."/>
            <person name="Suzuki H."/>
            <person name="Ikenoya M."/>
            <person name="Ikeda H."/>
            <person name="Yamashita A."/>
            <person name="Hattori M."/>
            <person name="Horinouchi S."/>
        </authorList>
    </citation>
    <scope>NUCLEOTIDE SEQUENCE [LARGE SCALE GENOMIC DNA]</scope>
    <source>
        <strain>JCM 4626 / CBS 651.72 / NBRC 13350 / KCC S-0626 / ISP 5235</strain>
    </source>
</reference>